<comment type="function">
    <text evidence="1">Catalyzes the attachment of threonine to tRNA(Thr) in a two-step reaction: L-threonine is first activated by ATP to form Thr-AMP and then transferred to the acceptor end of tRNA(Thr). Also edits incorrectly charged L-seryl-tRNA(Thr).</text>
</comment>
<comment type="catalytic activity">
    <reaction evidence="1">
        <text>tRNA(Thr) + L-threonine + ATP = L-threonyl-tRNA(Thr) + AMP + diphosphate + H(+)</text>
        <dbReference type="Rhea" id="RHEA:24624"/>
        <dbReference type="Rhea" id="RHEA-COMP:9670"/>
        <dbReference type="Rhea" id="RHEA-COMP:9704"/>
        <dbReference type="ChEBI" id="CHEBI:15378"/>
        <dbReference type="ChEBI" id="CHEBI:30616"/>
        <dbReference type="ChEBI" id="CHEBI:33019"/>
        <dbReference type="ChEBI" id="CHEBI:57926"/>
        <dbReference type="ChEBI" id="CHEBI:78442"/>
        <dbReference type="ChEBI" id="CHEBI:78534"/>
        <dbReference type="ChEBI" id="CHEBI:456215"/>
        <dbReference type="EC" id="6.1.1.3"/>
    </reaction>
</comment>
<comment type="cofactor">
    <cofactor evidence="1">
        <name>Zn(2+)</name>
        <dbReference type="ChEBI" id="CHEBI:29105"/>
    </cofactor>
    <text evidence="1">Binds 1 zinc ion per subunit.</text>
</comment>
<comment type="subunit">
    <text evidence="1">Homodimer.</text>
</comment>
<comment type="subcellular location">
    <subcellularLocation>
        <location evidence="1">Cytoplasm</location>
    </subcellularLocation>
</comment>
<comment type="similarity">
    <text evidence="1">Belongs to the class-II aminoacyl-tRNA synthetase family.</text>
</comment>
<gene>
    <name evidence="1" type="primary">thrS</name>
    <name type="ordered locus">Mmcs_2242</name>
</gene>
<evidence type="ECO:0000255" key="1">
    <source>
        <dbReference type="HAMAP-Rule" id="MF_00184"/>
    </source>
</evidence>
<evidence type="ECO:0000255" key="2">
    <source>
        <dbReference type="PROSITE-ProRule" id="PRU01228"/>
    </source>
</evidence>
<keyword id="KW-0030">Aminoacyl-tRNA synthetase</keyword>
<keyword id="KW-0067">ATP-binding</keyword>
<keyword id="KW-0963">Cytoplasm</keyword>
<keyword id="KW-0436">Ligase</keyword>
<keyword id="KW-0479">Metal-binding</keyword>
<keyword id="KW-0547">Nucleotide-binding</keyword>
<keyword id="KW-0648">Protein biosynthesis</keyword>
<keyword id="KW-0694">RNA-binding</keyword>
<keyword id="KW-0820">tRNA-binding</keyword>
<keyword id="KW-0862">Zinc</keyword>
<protein>
    <recommendedName>
        <fullName evidence="1">Threonine--tRNA ligase</fullName>
        <ecNumber evidence="1">6.1.1.3</ecNumber>
    </recommendedName>
    <alternativeName>
        <fullName evidence="1">Threonyl-tRNA synthetase</fullName>
        <shortName evidence="1">ThrRS</shortName>
    </alternativeName>
</protein>
<sequence>MSTAASPAPAAPIRVAAGTTAGAAVRDAGLPGRGAPDAIVVVREADGRLRDLSWTPDADVEVVPVPADSEDGRSVIRHSAAHVLAQAVQDLFPEAKLGIGPPITDGFYYDFDVPRAFTPEDLEALEKKMRKIVKDGQLFERRVYESEEEARRELANEPYKLELVDDKSGDPEVMEVGGDELTAYDNLNPRTRERVWGDLCRGPHIPTTKYIPAFKLTRSSAAYWRGDQTNASLQRIYGTAWESQEALDRHLELIEEAQRRDHRKLGVELDLFSFPDELGSGLPVFHPKGGIVRKELEDYSRAKHLQAGYEFVNTPHITKEQLYVTSGHLEWYADGMFPAMHIDAEYDADGAVRKPGQNYYLKPMNCPMHHLIYRSRGRSYRELPLRLFEFGSVYRYEKSGVVHGLTRVRGMTQDDAHIYATREQMRDELTSLLQFVLDLLSDYGLDEYYLELSTKDPDKYVGSDEIWDEATETLREVAEASGLDLVPDPGGAAFYGPKISVQVKDALGRNWQMSTIQLDFNMPERFELEYTAADGSRQRPVLIHRALFGSIERFFGVLTEHYAGAFPAWLAPVQVVGIPVADAHIPYLEDVAAQLRSRGVRVEIDGSDDRMAKKIVNHTNQRVPFMLLAGDKDVAAGAVSFRFGDRTQINGVPRDEAVEAIVGWIVERRNTAPTADLVKAGAGT</sequence>
<reference key="1">
    <citation type="submission" date="2006-06" db="EMBL/GenBank/DDBJ databases">
        <title>Complete sequence of chromosome of Mycobacterium sp. MCS.</title>
        <authorList>
            <consortium name="US DOE Joint Genome Institute"/>
            <person name="Copeland A."/>
            <person name="Lucas S."/>
            <person name="Lapidus A."/>
            <person name="Barry K."/>
            <person name="Detter J.C."/>
            <person name="Glavina del Rio T."/>
            <person name="Hammon N."/>
            <person name="Israni S."/>
            <person name="Dalin E."/>
            <person name="Tice H."/>
            <person name="Pitluck S."/>
            <person name="Martinez M."/>
            <person name="Schmutz J."/>
            <person name="Larimer F."/>
            <person name="Land M."/>
            <person name="Hauser L."/>
            <person name="Kyrpides N."/>
            <person name="Kim E."/>
            <person name="Miller C.D."/>
            <person name="Hughes J.E."/>
            <person name="Anderson A.J."/>
            <person name="Sims R.C."/>
            <person name="Richardson P."/>
        </authorList>
    </citation>
    <scope>NUCLEOTIDE SEQUENCE [LARGE SCALE GENOMIC DNA]</scope>
    <source>
        <strain>MCS</strain>
    </source>
</reference>
<proteinExistence type="inferred from homology"/>
<accession>Q1B9T4</accession>
<name>SYT_MYCSS</name>
<dbReference type="EC" id="6.1.1.3" evidence="1"/>
<dbReference type="EMBL" id="CP000384">
    <property type="protein sequence ID" value="ABG08350.1"/>
    <property type="molecule type" value="Genomic_DNA"/>
</dbReference>
<dbReference type="SMR" id="Q1B9T4"/>
<dbReference type="KEGG" id="mmc:Mmcs_2242"/>
<dbReference type="HOGENOM" id="CLU_008554_0_1_11"/>
<dbReference type="BioCyc" id="MSP164756:G1G6O-2294-MONOMER"/>
<dbReference type="GO" id="GO:0005737">
    <property type="term" value="C:cytoplasm"/>
    <property type="evidence" value="ECO:0007669"/>
    <property type="project" value="UniProtKB-SubCell"/>
</dbReference>
<dbReference type="GO" id="GO:0005524">
    <property type="term" value="F:ATP binding"/>
    <property type="evidence" value="ECO:0007669"/>
    <property type="project" value="UniProtKB-UniRule"/>
</dbReference>
<dbReference type="GO" id="GO:0046872">
    <property type="term" value="F:metal ion binding"/>
    <property type="evidence" value="ECO:0007669"/>
    <property type="project" value="UniProtKB-KW"/>
</dbReference>
<dbReference type="GO" id="GO:0004829">
    <property type="term" value="F:threonine-tRNA ligase activity"/>
    <property type="evidence" value="ECO:0007669"/>
    <property type="project" value="UniProtKB-UniRule"/>
</dbReference>
<dbReference type="GO" id="GO:0000049">
    <property type="term" value="F:tRNA binding"/>
    <property type="evidence" value="ECO:0007669"/>
    <property type="project" value="UniProtKB-KW"/>
</dbReference>
<dbReference type="GO" id="GO:0006435">
    <property type="term" value="P:threonyl-tRNA aminoacylation"/>
    <property type="evidence" value="ECO:0007669"/>
    <property type="project" value="UniProtKB-UniRule"/>
</dbReference>
<dbReference type="CDD" id="cd00860">
    <property type="entry name" value="ThrRS_anticodon"/>
    <property type="match status" value="1"/>
</dbReference>
<dbReference type="CDD" id="cd00771">
    <property type="entry name" value="ThrRS_core"/>
    <property type="match status" value="1"/>
</dbReference>
<dbReference type="FunFam" id="3.30.54.20:FF:000003">
    <property type="entry name" value="Threonine--tRNA ligase"/>
    <property type="match status" value="1"/>
</dbReference>
<dbReference type="FunFam" id="3.30.930.10:FF:000019">
    <property type="entry name" value="Threonine--tRNA ligase"/>
    <property type="match status" value="1"/>
</dbReference>
<dbReference type="FunFam" id="3.40.50.800:FF:000001">
    <property type="entry name" value="Threonine--tRNA ligase"/>
    <property type="match status" value="1"/>
</dbReference>
<dbReference type="FunFam" id="3.30.980.10:FF:000005">
    <property type="entry name" value="Threonyl-tRNA synthetase, mitochondrial"/>
    <property type="match status" value="1"/>
</dbReference>
<dbReference type="Gene3D" id="3.30.54.20">
    <property type="match status" value="1"/>
</dbReference>
<dbReference type="Gene3D" id="3.40.50.800">
    <property type="entry name" value="Anticodon-binding domain"/>
    <property type="match status" value="1"/>
</dbReference>
<dbReference type="Gene3D" id="3.30.930.10">
    <property type="entry name" value="Bira Bifunctional Protein, Domain 2"/>
    <property type="match status" value="1"/>
</dbReference>
<dbReference type="Gene3D" id="3.30.980.10">
    <property type="entry name" value="Threonyl-trna Synthetase, Chain A, domain 2"/>
    <property type="match status" value="1"/>
</dbReference>
<dbReference type="HAMAP" id="MF_00184">
    <property type="entry name" value="Thr_tRNA_synth"/>
    <property type="match status" value="1"/>
</dbReference>
<dbReference type="InterPro" id="IPR002314">
    <property type="entry name" value="aa-tRNA-synt_IIb"/>
</dbReference>
<dbReference type="InterPro" id="IPR006195">
    <property type="entry name" value="aa-tRNA-synth_II"/>
</dbReference>
<dbReference type="InterPro" id="IPR045864">
    <property type="entry name" value="aa-tRNA-synth_II/BPL/LPL"/>
</dbReference>
<dbReference type="InterPro" id="IPR004154">
    <property type="entry name" value="Anticodon-bd"/>
</dbReference>
<dbReference type="InterPro" id="IPR036621">
    <property type="entry name" value="Anticodon-bd_dom_sf"/>
</dbReference>
<dbReference type="InterPro" id="IPR004095">
    <property type="entry name" value="TGS"/>
</dbReference>
<dbReference type="InterPro" id="IPR002320">
    <property type="entry name" value="Thr-tRNA-ligase_IIa"/>
</dbReference>
<dbReference type="InterPro" id="IPR018163">
    <property type="entry name" value="Thr/Ala-tRNA-synth_IIc_edit"/>
</dbReference>
<dbReference type="InterPro" id="IPR047246">
    <property type="entry name" value="ThrRS_anticodon"/>
</dbReference>
<dbReference type="InterPro" id="IPR033728">
    <property type="entry name" value="ThrRS_core"/>
</dbReference>
<dbReference type="InterPro" id="IPR012947">
    <property type="entry name" value="tRNA_SAD"/>
</dbReference>
<dbReference type="NCBIfam" id="TIGR00418">
    <property type="entry name" value="thrS"/>
    <property type="match status" value="1"/>
</dbReference>
<dbReference type="PANTHER" id="PTHR11451:SF44">
    <property type="entry name" value="THREONINE--TRNA LIGASE, CHLOROPLASTIC_MITOCHONDRIAL 2"/>
    <property type="match status" value="1"/>
</dbReference>
<dbReference type="PANTHER" id="PTHR11451">
    <property type="entry name" value="THREONINE-TRNA LIGASE"/>
    <property type="match status" value="1"/>
</dbReference>
<dbReference type="Pfam" id="PF03129">
    <property type="entry name" value="HGTP_anticodon"/>
    <property type="match status" value="1"/>
</dbReference>
<dbReference type="Pfam" id="PF00587">
    <property type="entry name" value="tRNA-synt_2b"/>
    <property type="match status" value="1"/>
</dbReference>
<dbReference type="Pfam" id="PF07973">
    <property type="entry name" value="tRNA_SAD"/>
    <property type="match status" value="1"/>
</dbReference>
<dbReference type="PRINTS" id="PR01047">
    <property type="entry name" value="TRNASYNTHTHR"/>
</dbReference>
<dbReference type="SMART" id="SM00863">
    <property type="entry name" value="tRNA_SAD"/>
    <property type="match status" value="1"/>
</dbReference>
<dbReference type="SUPFAM" id="SSF52954">
    <property type="entry name" value="Class II aaRS ABD-related"/>
    <property type="match status" value="1"/>
</dbReference>
<dbReference type="SUPFAM" id="SSF55681">
    <property type="entry name" value="Class II aaRS and biotin synthetases"/>
    <property type="match status" value="1"/>
</dbReference>
<dbReference type="SUPFAM" id="SSF55186">
    <property type="entry name" value="ThrRS/AlaRS common domain"/>
    <property type="match status" value="1"/>
</dbReference>
<dbReference type="PROSITE" id="PS50862">
    <property type="entry name" value="AA_TRNA_LIGASE_II"/>
    <property type="match status" value="1"/>
</dbReference>
<dbReference type="PROSITE" id="PS51880">
    <property type="entry name" value="TGS"/>
    <property type="match status" value="1"/>
</dbReference>
<organism>
    <name type="scientific">Mycobacterium sp. (strain MCS)</name>
    <dbReference type="NCBI Taxonomy" id="164756"/>
    <lineage>
        <taxon>Bacteria</taxon>
        <taxon>Bacillati</taxon>
        <taxon>Actinomycetota</taxon>
        <taxon>Actinomycetes</taxon>
        <taxon>Mycobacteriales</taxon>
        <taxon>Mycobacteriaceae</taxon>
        <taxon>Mycobacterium</taxon>
    </lineage>
</organism>
<feature type="chain" id="PRO_1000020443" description="Threonine--tRNA ligase">
    <location>
        <begin position="1"/>
        <end position="684"/>
    </location>
</feature>
<feature type="domain" description="TGS" evidence="2">
    <location>
        <begin position="1"/>
        <end position="66"/>
    </location>
</feature>
<feature type="region of interest" description="Catalytic" evidence="1">
    <location>
        <begin position="261"/>
        <end position="567"/>
    </location>
</feature>
<feature type="binding site" evidence="1">
    <location>
        <position position="366"/>
    </location>
    <ligand>
        <name>Zn(2+)</name>
        <dbReference type="ChEBI" id="CHEBI:29105"/>
    </ligand>
</feature>
<feature type="binding site" evidence="1">
    <location>
        <position position="417"/>
    </location>
    <ligand>
        <name>Zn(2+)</name>
        <dbReference type="ChEBI" id="CHEBI:29105"/>
    </ligand>
</feature>
<feature type="binding site" evidence="1">
    <location>
        <position position="544"/>
    </location>
    <ligand>
        <name>Zn(2+)</name>
        <dbReference type="ChEBI" id="CHEBI:29105"/>
    </ligand>
</feature>